<comment type="function">
    <text evidence="1">Core subunit of the mitochondrial membrane respiratory chain NADH dehydrogenase (Complex I) which catalyzes electron transfer from NADH through the respiratory chain, using ubiquinone as an electron acceptor. Essential for the catalytic activity of complex I.</text>
</comment>
<comment type="catalytic activity">
    <reaction evidence="1">
        <text>a ubiquinone + NADH + 5 H(+)(in) = a ubiquinol + NAD(+) + 4 H(+)(out)</text>
        <dbReference type="Rhea" id="RHEA:29091"/>
        <dbReference type="Rhea" id="RHEA-COMP:9565"/>
        <dbReference type="Rhea" id="RHEA-COMP:9566"/>
        <dbReference type="ChEBI" id="CHEBI:15378"/>
        <dbReference type="ChEBI" id="CHEBI:16389"/>
        <dbReference type="ChEBI" id="CHEBI:17976"/>
        <dbReference type="ChEBI" id="CHEBI:57540"/>
        <dbReference type="ChEBI" id="CHEBI:57945"/>
        <dbReference type="EC" id="7.1.1.2"/>
    </reaction>
</comment>
<comment type="subunit">
    <text evidence="1 4">Core subunit of respiratory chain NADH dehydrogenase (Complex I) which is composed of 45 different subunits (PubMed:25209663). Interacts with TMEM186 (By similarity). Interacts with TMEM242 (By similarity).</text>
</comment>
<comment type="subcellular location">
    <subcellularLocation>
        <location evidence="3 4">Mitochondrion inner membrane</location>
        <topology evidence="2">Multi-pass membrane protein</topology>
    </subcellularLocation>
</comment>
<comment type="mass spectrometry" mass="13082.4" method="Electrospray" evidence="3"/>
<comment type="similarity">
    <text evidence="5">Belongs to the complex I subunit 3 family.</text>
</comment>
<protein>
    <recommendedName>
        <fullName evidence="1">NADH-ubiquinone oxidoreductase chain 3</fullName>
        <ecNumber evidence="1">7.1.1.2</ecNumber>
    </recommendedName>
    <alternativeName>
        <fullName>NADH dehydrogenase subunit 3</fullName>
    </alternativeName>
</protein>
<name>NU3M_BOVIN</name>
<gene>
    <name evidence="1" type="primary">MT-ND3</name>
    <name type="synonym">MTND3</name>
    <name type="synonym">NADH3</name>
    <name type="synonym">ND3</name>
</gene>
<evidence type="ECO:0000250" key="1">
    <source>
        <dbReference type="UniProtKB" id="P03897"/>
    </source>
</evidence>
<evidence type="ECO:0000255" key="2"/>
<evidence type="ECO:0000269" key="3">
    <source>
    </source>
</evidence>
<evidence type="ECO:0000269" key="4">
    <source>
    </source>
</evidence>
<evidence type="ECO:0000305" key="5"/>
<evidence type="ECO:0000312" key="6">
    <source>
        <dbReference type="Proteomes" id="UP000009136"/>
    </source>
</evidence>
<evidence type="ECO:0007829" key="7">
    <source>
        <dbReference type="PDB" id="7QSL"/>
    </source>
</evidence>
<evidence type="ECO:0007829" key="8">
    <source>
        <dbReference type="PDB" id="7QSM"/>
    </source>
</evidence>
<evidence type="ECO:0007829" key="9">
    <source>
        <dbReference type="PDB" id="7QSO"/>
    </source>
</evidence>
<accession>P03898</accession>
<accession>Q8SEI7</accession>
<reference key="1">
    <citation type="journal article" date="1982" name="J. Mol. Biol.">
        <title>Complete sequence of bovine mitochondrial DNA. Conserved features of the mammalian mitochondrial genome.</title>
        <authorList>
            <person name="Anderson S."/>
            <person name="de Bruijn M.H.L."/>
            <person name="Coulson A.R."/>
            <person name="Eperon I.C."/>
            <person name="Sanger F."/>
            <person name="Young I.G."/>
        </authorList>
    </citation>
    <scope>NUCLEOTIDE SEQUENCE [GENOMIC DNA]</scope>
    <source>
        <strain evidence="6">Hereford</strain>
        <tissue>Heart</tissue>
    </source>
</reference>
<reference key="2">
    <citation type="submission" date="2002-03" db="EMBL/GenBank/DDBJ databases">
        <title>Bos taurus mitochondrial protein coding regions.</title>
        <authorList>
            <person name="Wettstein P.J."/>
        </authorList>
    </citation>
    <scope>NUCLEOTIDE SEQUENCE [GENOMIC DNA]</scope>
    <source>
        <strain>65</strain>
        <strain>66</strain>
        <strain>D</strain>
        <strain>F</strain>
    </source>
</reference>
<reference key="3">
    <citation type="journal article" date="2006" name="Proc. Natl. Acad. Sci. U.S.A.">
        <title>Definition of the mitochondrial proteome by measurement of molecular masses of membrane proteins.</title>
        <authorList>
            <person name="Carroll J."/>
            <person name="Fearnley I.M."/>
            <person name="Walker J.E."/>
        </authorList>
    </citation>
    <scope>SUBCELLULAR LOCATION</scope>
    <scope>FORMYLATION AT MET-1</scope>
    <scope>MASS SPECTROMETRY</scope>
</reference>
<reference key="4">
    <citation type="journal article" date="2014" name="Nature">
        <title>Architecture of mammalian respiratory complex I.</title>
        <authorList>
            <person name="Vinothkumar K.R."/>
            <person name="Zhu J."/>
            <person name="Hirst J."/>
        </authorList>
    </citation>
    <scope>SUBUNIT</scope>
    <scope>SUBCELLULAR LOCATION</scope>
</reference>
<sequence length="115" mass="13055">MNLMLALLTNFTLATLLVIIAFWLPQLNVYSEKTSPYECGFDPMGSARLPFSMKFFLVAITFLLFDLEIALLLPLPWASQTANLNTMLTMALFLIILLAVSLAYEWTQKGLEWTE</sequence>
<proteinExistence type="evidence at protein level"/>
<organism>
    <name type="scientific">Bos taurus</name>
    <name type="common">Bovine</name>
    <dbReference type="NCBI Taxonomy" id="9913"/>
    <lineage>
        <taxon>Eukaryota</taxon>
        <taxon>Metazoa</taxon>
        <taxon>Chordata</taxon>
        <taxon>Craniata</taxon>
        <taxon>Vertebrata</taxon>
        <taxon>Euteleostomi</taxon>
        <taxon>Mammalia</taxon>
        <taxon>Eutheria</taxon>
        <taxon>Laurasiatheria</taxon>
        <taxon>Artiodactyla</taxon>
        <taxon>Ruminantia</taxon>
        <taxon>Pecora</taxon>
        <taxon>Bovidae</taxon>
        <taxon>Bovinae</taxon>
        <taxon>Bos</taxon>
    </lineage>
</organism>
<feature type="chain" id="PRO_0000117716" description="NADH-ubiquinone oxidoreductase chain 3">
    <location>
        <begin position="1"/>
        <end position="115"/>
    </location>
</feature>
<feature type="transmembrane region" description="Helical" evidence="2">
    <location>
        <begin position="3"/>
        <end position="23"/>
    </location>
</feature>
<feature type="transmembrane region" description="Helical" evidence="2">
    <location>
        <begin position="55"/>
        <end position="75"/>
    </location>
</feature>
<feature type="transmembrane region" description="Helical" evidence="2">
    <location>
        <begin position="84"/>
        <end position="104"/>
    </location>
</feature>
<feature type="modified residue" description="N-formylmethionine" evidence="3">
    <location>
        <position position="1"/>
    </location>
</feature>
<feature type="helix" evidence="8">
    <location>
        <begin position="2"/>
        <end position="23"/>
    </location>
</feature>
<feature type="helix" evidence="8">
    <location>
        <begin position="24"/>
        <end position="27"/>
    </location>
</feature>
<feature type="helix" evidence="7">
    <location>
        <begin position="31"/>
        <end position="34"/>
    </location>
</feature>
<feature type="helix" evidence="8">
    <location>
        <begin position="53"/>
        <end position="72"/>
    </location>
</feature>
<feature type="helix" evidence="8">
    <location>
        <begin position="75"/>
        <end position="78"/>
    </location>
</feature>
<feature type="helix" evidence="8">
    <location>
        <begin position="84"/>
        <end position="107"/>
    </location>
</feature>
<feature type="turn" evidence="8">
    <location>
        <begin position="108"/>
        <end position="111"/>
    </location>
</feature>
<feature type="turn" evidence="9">
    <location>
        <begin position="112"/>
        <end position="114"/>
    </location>
</feature>
<keyword id="KW-0002">3D-structure</keyword>
<keyword id="KW-0249">Electron transport</keyword>
<keyword id="KW-0291">Formylation</keyword>
<keyword id="KW-0472">Membrane</keyword>
<keyword id="KW-0496">Mitochondrion</keyword>
<keyword id="KW-0999">Mitochondrion inner membrane</keyword>
<keyword id="KW-0520">NAD</keyword>
<keyword id="KW-1185">Reference proteome</keyword>
<keyword id="KW-0679">Respiratory chain</keyword>
<keyword id="KW-1278">Translocase</keyword>
<keyword id="KW-0812">Transmembrane</keyword>
<keyword id="KW-1133">Transmembrane helix</keyword>
<keyword id="KW-0813">Transport</keyword>
<keyword id="KW-0830">Ubiquinone</keyword>
<geneLocation type="mitochondrion"/>
<dbReference type="EC" id="7.1.1.2" evidence="1"/>
<dbReference type="EMBL" id="V00654">
    <property type="protein sequence ID" value="CAA24008.1"/>
    <property type="status" value="ALT_SEQ"/>
    <property type="molecule type" value="Genomic_DNA"/>
</dbReference>
<dbReference type="EMBL" id="AF490528">
    <property type="protein sequence ID" value="AAM08324.1"/>
    <property type="status" value="ALT_SEQ"/>
    <property type="molecule type" value="Genomic_DNA"/>
</dbReference>
<dbReference type="EMBL" id="AF490529">
    <property type="protein sequence ID" value="AAM08337.1"/>
    <property type="status" value="ALT_SEQ"/>
    <property type="molecule type" value="Genomic_DNA"/>
</dbReference>
<dbReference type="EMBL" id="AF493541">
    <property type="protein sequence ID" value="AAM12796.1"/>
    <property type="status" value="ALT_SEQ"/>
    <property type="molecule type" value="Genomic_DNA"/>
</dbReference>
<dbReference type="EMBL" id="AF493542">
    <property type="protein sequence ID" value="AAM12809.1"/>
    <property type="status" value="ALT_SEQ"/>
    <property type="molecule type" value="Genomic_DNA"/>
</dbReference>
<dbReference type="PIR" id="A00423">
    <property type="entry name" value="QXBO3M"/>
</dbReference>
<dbReference type="RefSeq" id="YP_209212.2">
    <property type="nucleotide sequence ID" value="NC_006853.1"/>
</dbReference>
<dbReference type="PDB" id="5LC5">
    <property type="method" value="EM"/>
    <property type="resolution" value="4.35 A"/>
    <property type="chains" value="A=2-112"/>
</dbReference>
<dbReference type="PDB" id="5LDW">
    <property type="method" value="EM"/>
    <property type="resolution" value="4.27 A"/>
    <property type="chains" value="A=1-115"/>
</dbReference>
<dbReference type="PDB" id="5LDX">
    <property type="method" value="EM"/>
    <property type="resolution" value="5.60 A"/>
    <property type="chains" value="A=1-115"/>
</dbReference>
<dbReference type="PDB" id="5O31">
    <property type="method" value="EM"/>
    <property type="resolution" value="4.13 A"/>
    <property type="chains" value="A=1-115"/>
</dbReference>
<dbReference type="PDB" id="7DGQ">
    <property type="method" value="EM"/>
    <property type="resolution" value="5.00 A"/>
    <property type="chains" value="3=1-115"/>
</dbReference>
<dbReference type="PDB" id="7DGR">
    <property type="method" value="EM"/>
    <property type="resolution" value="4.60 A"/>
    <property type="chains" value="3=1-115"/>
</dbReference>
<dbReference type="PDB" id="7DGS">
    <property type="method" value="EM"/>
    <property type="resolution" value="7.80 A"/>
    <property type="chains" value="3=1-115"/>
</dbReference>
<dbReference type="PDB" id="7DGZ">
    <property type="method" value="EM"/>
    <property type="resolution" value="3.80 A"/>
    <property type="chains" value="3=1-115"/>
</dbReference>
<dbReference type="PDB" id="7DH0">
    <property type="method" value="EM"/>
    <property type="resolution" value="4.20 A"/>
    <property type="chains" value="3=1-115"/>
</dbReference>
<dbReference type="PDB" id="7DKF">
    <property type="method" value="EM"/>
    <property type="resolution" value="8.30 A"/>
    <property type="chains" value="32=1-115"/>
</dbReference>
<dbReference type="PDB" id="7QSD">
    <property type="method" value="EM"/>
    <property type="resolution" value="3.10 A"/>
    <property type="chains" value="A=1-115"/>
</dbReference>
<dbReference type="PDB" id="7QSK">
    <property type="method" value="EM"/>
    <property type="resolution" value="2.84 A"/>
    <property type="chains" value="A=1-115"/>
</dbReference>
<dbReference type="PDB" id="7QSL">
    <property type="method" value="EM"/>
    <property type="resolution" value="2.76 A"/>
    <property type="chains" value="A=1-115"/>
</dbReference>
<dbReference type="PDB" id="7QSM">
    <property type="method" value="EM"/>
    <property type="resolution" value="2.30 A"/>
    <property type="chains" value="A=1-115"/>
</dbReference>
<dbReference type="PDB" id="7QSN">
    <property type="method" value="EM"/>
    <property type="resolution" value="2.81 A"/>
    <property type="chains" value="A=1-115"/>
</dbReference>
<dbReference type="PDB" id="7QSO">
    <property type="method" value="EM"/>
    <property type="resolution" value="3.02 A"/>
    <property type="chains" value="A=1-115"/>
</dbReference>
<dbReference type="PDB" id="7R41">
    <property type="method" value="EM"/>
    <property type="resolution" value="2.30 A"/>
    <property type="chains" value="A=1-115"/>
</dbReference>
<dbReference type="PDB" id="7R42">
    <property type="method" value="EM"/>
    <property type="resolution" value="2.30 A"/>
    <property type="chains" value="A=1-115"/>
</dbReference>
<dbReference type="PDB" id="7R43">
    <property type="method" value="EM"/>
    <property type="resolution" value="2.40 A"/>
    <property type="chains" value="A=1-115"/>
</dbReference>
<dbReference type="PDB" id="7R44">
    <property type="method" value="EM"/>
    <property type="resolution" value="2.40 A"/>
    <property type="chains" value="A=1-115"/>
</dbReference>
<dbReference type="PDB" id="7R45">
    <property type="method" value="EM"/>
    <property type="resolution" value="2.40 A"/>
    <property type="chains" value="A=1-115"/>
</dbReference>
<dbReference type="PDB" id="7R46">
    <property type="method" value="EM"/>
    <property type="resolution" value="2.40 A"/>
    <property type="chains" value="A=1-115"/>
</dbReference>
<dbReference type="PDB" id="7R47">
    <property type="method" value="EM"/>
    <property type="resolution" value="2.30 A"/>
    <property type="chains" value="A=1-115"/>
</dbReference>
<dbReference type="PDB" id="7R48">
    <property type="method" value="EM"/>
    <property type="resolution" value="2.30 A"/>
    <property type="chains" value="A=1-115"/>
</dbReference>
<dbReference type="PDB" id="7R4C">
    <property type="method" value="EM"/>
    <property type="resolution" value="2.30 A"/>
    <property type="chains" value="A=1-115"/>
</dbReference>
<dbReference type="PDB" id="7R4D">
    <property type="method" value="EM"/>
    <property type="resolution" value="2.30 A"/>
    <property type="chains" value="A=1-115"/>
</dbReference>
<dbReference type="PDB" id="7R4F">
    <property type="method" value="EM"/>
    <property type="resolution" value="2.40 A"/>
    <property type="chains" value="A=1-115"/>
</dbReference>
<dbReference type="PDB" id="7R4G">
    <property type="method" value="EM"/>
    <property type="resolution" value="2.50 A"/>
    <property type="chains" value="A=1-115"/>
</dbReference>
<dbReference type="PDB" id="8Q0A">
    <property type="method" value="EM"/>
    <property type="resolution" value="3.10 A"/>
    <property type="chains" value="A=1-115"/>
</dbReference>
<dbReference type="PDB" id="8Q0F">
    <property type="method" value="EM"/>
    <property type="resolution" value="3.10 A"/>
    <property type="chains" value="A=1-115"/>
</dbReference>
<dbReference type="PDB" id="8Q0J">
    <property type="method" value="EM"/>
    <property type="resolution" value="3.80 A"/>
    <property type="chains" value="A=1-115"/>
</dbReference>
<dbReference type="PDB" id="8Q0M">
    <property type="method" value="EM"/>
    <property type="resolution" value="3.10 A"/>
    <property type="chains" value="A=1-115"/>
</dbReference>
<dbReference type="PDB" id="8Q0O">
    <property type="method" value="EM"/>
    <property type="resolution" value="3.10 A"/>
    <property type="chains" value="A=1-115"/>
</dbReference>
<dbReference type="PDB" id="8Q0Q">
    <property type="method" value="EM"/>
    <property type="resolution" value="3.60 A"/>
    <property type="chains" value="A=1-115"/>
</dbReference>
<dbReference type="PDB" id="8Q1P">
    <property type="method" value="EM"/>
    <property type="resolution" value="2.90 A"/>
    <property type="chains" value="A=1-115"/>
</dbReference>
<dbReference type="PDB" id="8Q1U">
    <property type="method" value="EM"/>
    <property type="resolution" value="3.30 A"/>
    <property type="chains" value="A=1-115"/>
</dbReference>
<dbReference type="PDB" id="8Q1Y">
    <property type="method" value="EM"/>
    <property type="resolution" value="2.60 A"/>
    <property type="chains" value="A=1-115"/>
</dbReference>
<dbReference type="PDB" id="8Q25">
    <property type="method" value="EM"/>
    <property type="resolution" value="2.80 A"/>
    <property type="chains" value="A=1-115"/>
</dbReference>
<dbReference type="PDB" id="8Q45">
    <property type="method" value="EM"/>
    <property type="resolution" value="2.70 A"/>
    <property type="chains" value="A=1-115"/>
</dbReference>
<dbReference type="PDB" id="8Q46">
    <property type="method" value="EM"/>
    <property type="resolution" value="2.60 A"/>
    <property type="chains" value="A=1-115"/>
</dbReference>
<dbReference type="PDB" id="8Q47">
    <property type="method" value="EM"/>
    <property type="resolution" value="2.90 A"/>
    <property type="chains" value="A=1-115"/>
</dbReference>
<dbReference type="PDB" id="8Q48">
    <property type="method" value="EM"/>
    <property type="resolution" value="2.50 A"/>
    <property type="chains" value="A=1-115"/>
</dbReference>
<dbReference type="PDB" id="8Q49">
    <property type="method" value="EM"/>
    <property type="resolution" value="2.60 A"/>
    <property type="chains" value="A=1-115"/>
</dbReference>
<dbReference type="PDB" id="8Q4A">
    <property type="method" value="EM"/>
    <property type="resolution" value="2.60 A"/>
    <property type="chains" value="A=1-115"/>
</dbReference>
<dbReference type="PDBsum" id="5LC5"/>
<dbReference type="PDBsum" id="5LDW"/>
<dbReference type="PDBsum" id="5LDX"/>
<dbReference type="PDBsum" id="5O31"/>
<dbReference type="PDBsum" id="7DGQ"/>
<dbReference type="PDBsum" id="7DGR"/>
<dbReference type="PDBsum" id="7DGS"/>
<dbReference type="PDBsum" id="7DGZ"/>
<dbReference type="PDBsum" id="7DH0"/>
<dbReference type="PDBsum" id="7DKF"/>
<dbReference type="PDBsum" id="7QSD"/>
<dbReference type="PDBsum" id="7QSK"/>
<dbReference type="PDBsum" id="7QSL"/>
<dbReference type="PDBsum" id="7QSM"/>
<dbReference type="PDBsum" id="7QSN"/>
<dbReference type="PDBsum" id="7QSO"/>
<dbReference type="PDBsum" id="7R41"/>
<dbReference type="PDBsum" id="7R42"/>
<dbReference type="PDBsum" id="7R43"/>
<dbReference type="PDBsum" id="7R44"/>
<dbReference type="PDBsum" id="7R45"/>
<dbReference type="PDBsum" id="7R46"/>
<dbReference type="PDBsum" id="7R47"/>
<dbReference type="PDBsum" id="7R48"/>
<dbReference type="PDBsum" id="7R4C"/>
<dbReference type="PDBsum" id="7R4D"/>
<dbReference type="PDBsum" id="7R4F"/>
<dbReference type="PDBsum" id="7R4G"/>
<dbReference type="PDBsum" id="8Q0A"/>
<dbReference type="PDBsum" id="8Q0F"/>
<dbReference type="PDBsum" id="8Q0J"/>
<dbReference type="PDBsum" id="8Q0M"/>
<dbReference type="PDBsum" id="8Q0O"/>
<dbReference type="PDBsum" id="8Q0Q"/>
<dbReference type="PDBsum" id="8Q1P"/>
<dbReference type="PDBsum" id="8Q1U"/>
<dbReference type="PDBsum" id="8Q1Y"/>
<dbReference type="PDBsum" id="8Q25"/>
<dbReference type="PDBsum" id="8Q45"/>
<dbReference type="PDBsum" id="8Q46"/>
<dbReference type="PDBsum" id="8Q47"/>
<dbReference type="PDBsum" id="8Q48"/>
<dbReference type="PDBsum" id="8Q49"/>
<dbReference type="PDBsum" id="8Q4A"/>
<dbReference type="EMDB" id="EMD-14127"/>
<dbReference type="EMDB" id="EMD-14132"/>
<dbReference type="EMDB" id="EMD-14133"/>
<dbReference type="EMDB" id="EMD-14134"/>
<dbReference type="EMDB" id="EMD-14139"/>
<dbReference type="EMDB" id="EMD-14140"/>
<dbReference type="EMDB" id="EMD-14251"/>
<dbReference type="EMDB" id="EMD-14256"/>
<dbReference type="EMDB" id="EMD-14261"/>
<dbReference type="EMDB" id="EMD-14266"/>
<dbReference type="EMDB" id="EMD-14272"/>
<dbReference type="EMDB" id="EMD-14277"/>
<dbReference type="EMDB" id="EMD-14282"/>
<dbReference type="EMDB" id="EMD-14287"/>
<dbReference type="EMDB" id="EMD-14292"/>
<dbReference type="EMDB" id="EMD-14297"/>
<dbReference type="EMDB" id="EMD-14302"/>
<dbReference type="EMDB" id="EMD-14307"/>
<dbReference type="EMDB" id="EMD-30673"/>
<dbReference type="EMDB" id="EMD-30674"/>
<dbReference type="EMDB" id="EMD-30675"/>
<dbReference type="EMDB" id="EMD-30676"/>
<dbReference type="EMDB" id="EMD-30677"/>
<dbReference type="EMDB" id="EMD-30706"/>
<dbReference type="EMDB" id="EMD-3731"/>
<dbReference type="EMDB" id="EMD-4032"/>
<dbReference type="EMDB" id="EMD-4040"/>
<dbReference type="EMDB" id="EMD-4041"/>
<dbReference type="SMR" id="P03898"/>
<dbReference type="CORUM" id="P03898"/>
<dbReference type="DIP" id="DIP-38829N"/>
<dbReference type="FunCoup" id="P03898">
    <property type="interactions" value="152"/>
</dbReference>
<dbReference type="IntAct" id="P03898">
    <property type="interactions" value="2"/>
</dbReference>
<dbReference type="MINT" id="P03898"/>
<dbReference type="STRING" id="9913.ENSBTAP00000053159"/>
<dbReference type="ChEMBL" id="CHEMBL4498"/>
<dbReference type="TCDB" id="3.D.1.6.1">
    <property type="family name" value="the h+ or na+-translocating nadh dehydrogenase (ndh) family"/>
</dbReference>
<dbReference type="PaxDb" id="9913-ENSBTAP00000053159"/>
<dbReference type="Ensembl" id="ENSBTAT00000060547.1">
    <property type="protein sequence ID" value="ENSBTAP00000053159.1"/>
    <property type="gene ID" value="ENSBTAG00000043568.1"/>
</dbReference>
<dbReference type="GeneID" id="3283884"/>
<dbReference type="KEGG" id="bta:3283884"/>
<dbReference type="CTD" id="4537"/>
<dbReference type="VEuPathDB" id="HostDB:ENSBTAG00000043568"/>
<dbReference type="VGNC" id="VGNC:55741">
    <property type="gene designation" value="MT-ND3"/>
</dbReference>
<dbReference type="eggNOG" id="KOG4662">
    <property type="taxonomic scope" value="Eukaryota"/>
</dbReference>
<dbReference type="GeneTree" id="ENSGT00390000011605"/>
<dbReference type="HOGENOM" id="CLU_119549_3_1_1"/>
<dbReference type="InParanoid" id="P03898"/>
<dbReference type="OMA" id="GPRRYNR"/>
<dbReference type="OrthoDB" id="154075at2759"/>
<dbReference type="TreeFam" id="TF343336"/>
<dbReference type="Reactome" id="R-BTA-611105">
    <property type="pathway name" value="Respiratory electron transport"/>
</dbReference>
<dbReference type="Reactome" id="R-BTA-6799198">
    <property type="pathway name" value="Complex I biogenesis"/>
</dbReference>
<dbReference type="Proteomes" id="UP000009136">
    <property type="component" value="Mitochondrion MT"/>
</dbReference>
<dbReference type="Bgee" id="ENSBTAG00000043568">
    <property type="expression patterns" value="Expressed in laryngeal cartilage and 103 other cell types or tissues"/>
</dbReference>
<dbReference type="GO" id="GO:0005743">
    <property type="term" value="C:mitochondrial inner membrane"/>
    <property type="evidence" value="ECO:0000314"/>
    <property type="project" value="UniProtKB"/>
</dbReference>
<dbReference type="GO" id="GO:0045271">
    <property type="term" value="C:respiratory chain complex I"/>
    <property type="evidence" value="ECO:0000314"/>
    <property type="project" value="UniProtKB"/>
</dbReference>
<dbReference type="GO" id="GO:0008137">
    <property type="term" value="F:NADH dehydrogenase (ubiquinone) activity"/>
    <property type="evidence" value="ECO:0000250"/>
    <property type="project" value="UniProtKB"/>
</dbReference>
<dbReference type="GO" id="GO:0006120">
    <property type="term" value="P:mitochondrial electron transport, NADH to ubiquinone"/>
    <property type="evidence" value="ECO:0000250"/>
    <property type="project" value="UniProtKB"/>
</dbReference>
<dbReference type="FunFam" id="1.20.58.1610:FF:000004">
    <property type="entry name" value="NADH-quinone oxidoreductase subunit A"/>
    <property type="match status" value="1"/>
</dbReference>
<dbReference type="Gene3D" id="1.20.58.1610">
    <property type="entry name" value="NADH:ubiquinone/plastoquinone oxidoreductase, chain 3"/>
    <property type="match status" value="1"/>
</dbReference>
<dbReference type="InterPro" id="IPR000440">
    <property type="entry name" value="NADH_UbQ/plastoQ_OxRdtase_su3"/>
</dbReference>
<dbReference type="InterPro" id="IPR038430">
    <property type="entry name" value="NDAH_ubi_oxred_su3_sf"/>
</dbReference>
<dbReference type="PANTHER" id="PTHR11058">
    <property type="entry name" value="NADH-UBIQUINONE OXIDOREDUCTASE CHAIN 3"/>
    <property type="match status" value="1"/>
</dbReference>
<dbReference type="PANTHER" id="PTHR11058:SF9">
    <property type="entry name" value="NADH-UBIQUINONE OXIDOREDUCTASE CHAIN 3"/>
    <property type="match status" value="1"/>
</dbReference>
<dbReference type="Pfam" id="PF00507">
    <property type="entry name" value="Oxidored_q4"/>
    <property type="match status" value="1"/>
</dbReference>